<keyword id="KW-0119">Carbohydrate metabolism</keyword>
<keyword id="KW-0136">Cellulose degradation</keyword>
<keyword id="KW-0186">Copper</keyword>
<keyword id="KW-1015">Disulfide bond</keyword>
<keyword id="KW-0479">Metal-binding</keyword>
<keyword id="KW-0503">Monooxygenase</keyword>
<keyword id="KW-0560">Oxidoreductase</keyword>
<keyword id="KW-0624">Polysaccharide degradation</keyword>
<keyword id="KW-1185">Reference proteome</keyword>
<keyword id="KW-0964">Secreted</keyword>
<keyword id="KW-0732">Signal</keyword>
<organism>
    <name type="scientific">Podospora anserina (strain S / ATCC MYA-4624 / DSM 980 / FGSC 10383)</name>
    <name type="common">Pleurage anserina</name>
    <dbReference type="NCBI Taxonomy" id="515849"/>
    <lineage>
        <taxon>Eukaryota</taxon>
        <taxon>Fungi</taxon>
        <taxon>Dikarya</taxon>
        <taxon>Ascomycota</taxon>
        <taxon>Pezizomycotina</taxon>
        <taxon>Sordariomycetes</taxon>
        <taxon>Sordariomycetidae</taxon>
        <taxon>Sordariales</taxon>
        <taxon>Podosporaceae</taxon>
        <taxon>Podospora</taxon>
        <taxon>Podospora anserina</taxon>
    </lineage>
</organism>
<dbReference type="EC" id="1.14.99.56" evidence="5 6"/>
<dbReference type="EMBL" id="CU640366">
    <property type="protein sequence ID" value="CAP73254.1"/>
    <property type="molecule type" value="Genomic_DNA"/>
</dbReference>
<dbReference type="EMBL" id="FO904937">
    <property type="protein sequence ID" value="CDP25655.1"/>
    <property type="molecule type" value="Genomic_DNA"/>
</dbReference>
<dbReference type="RefSeq" id="XP_001911429.1">
    <property type="nucleotide sequence ID" value="XM_001911394.1"/>
</dbReference>
<dbReference type="SMR" id="B2B629"/>
<dbReference type="STRING" id="515849.B2B629"/>
<dbReference type="CAZy" id="AA9">
    <property type="family name" value="Auxiliary Activities 9"/>
</dbReference>
<dbReference type="CAZy" id="CBM1">
    <property type="family name" value="Carbohydrate-Binding Module Family 1"/>
</dbReference>
<dbReference type="GeneID" id="6195934"/>
<dbReference type="KEGG" id="pan:PODANSg8471"/>
<dbReference type="VEuPathDB" id="FungiDB:PODANS_2_6530"/>
<dbReference type="eggNOG" id="ENOG502RY3D">
    <property type="taxonomic scope" value="Eukaryota"/>
</dbReference>
<dbReference type="HOGENOM" id="CLU_031730_1_0_1"/>
<dbReference type="OrthoDB" id="4849160at2759"/>
<dbReference type="BRENDA" id="1.14.99.54">
    <property type="organism ID" value="4930"/>
</dbReference>
<dbReference type="Proteomes" id="UP000001197">
    <property type="component" value="Chromosome 2"/>
</dbReference>
<dbReference type="GO" id="GO:0005576">
    <property type="term" value="C:extracellular region"/>
    <property type="evidence" value="ECO:0007669"/>
    <property type="project" value="UniProtKB-SubCell"/>
</dbReference>
<dbReference type="GO" id="GO:0030248">
    <property type="term" value="F:cellulose binding"/>
    <property type="evidence" value="ECO:0007669"/>
    <property type="project" value="InterPro"/>
</dbReference>
<dbReference type="GO" id="GO:0046872">
    <property type="term" value="F:metal ion binding"/>
    <property type="evidence" value="ECO:0007669"/>
    <property type="project" value="UniProtKB-KW"/>
</dbReference>
<dbReference type="GO" id="GO:0004497">
    <property type="term" value="F:monooxygenase activity"/>
    <property type="evidence" value="ECO:0007669"/>
    <property type="project" value="UniProtKB-KW"/>
</dbReference>
<dbReference type="GO" id="GO:0030245">
    <property type="term" value="P:cellulose catabolic process"/>
    <property type="evidence" value="ECO:0007669"/>
    <property type="project" value="UniProtKB-KW"/>
</dbReference>
<dbReference type="CDD" id="cd21175">
    <property type="entry name" value="LPMO_AA9"/>
    <property type="match status" value="1"/>
</dbReference>
<dbReference type="Gene3D" id="2.70.50.70">
    <property type="match status" value="1"/>
</dbReference>
<dbReference type="InterPro" id="IPR049892">
    <property type="entry name" value="AA9"/>
</dbReference>
<dbReference type="InterPro" id="IPR005103">
    <property type="entry name" value="AA9_LPMO"/>
</dbReference>
<dbReference type="InterPro" id="IPR035971">
    <property type="entry name" value="CBD_sf"/>
</dbReference>
<dbReference type="InterPro" id="IPR000254">
    <property type="entry name" value="Cellulose-bd_dom_fun"/>
</dbReference>
<dbReference type="PANTHER" id="PTHR33353:SF36">
    <property type="entry name" value="ENDO-BETA-1,4-GLUCANASE D"/>
    <property type="match status" value="1"/>
</dbReference>
<dbReference type="PANTHER" id="PTHR33353">
    <property type="entry name" value="PUTATIVE (AFU_ORTHOLOGUE AFUA_1G12560)-RELATED"/>
    <property type="match status" value="1"/>
</dbReference>
<dbReference type="Pfam" id="PF03443">
    <property type="entry name" value="AA9"/>
    <property type="match status" value="1"/>
</dbReference>
<dbReference type="Pfam" id="PF00734">
    <property type="entry name" value="CBM_1"/>
    <property type="match status" value="1"/>
</dbReference>
<dbReference type="SMART" id="SM00236">
    <property type="entry name" value="fCBD"/>
    <property type="match status" value="1"/>
</dbReference>
<dbReference type="SUPFAM" id="SSF57180">
    <property type="entry name" value="Cellulose-binding domain"/>
    <property type="match status" value="1"/>
</dbReference>
<dbReference type="PROSITE" id="PS00562">
    <property type="entry name" value="CBM1_1"/>
    <property type="match status" value="1"/>
</dbReference>
<dbReference type="PROSITE" id="PS51164">
    <property type="entry name" value="CBM1_2"/>
    <property type="match status" value="1"/>
</dbReference>
<comment type="function">
    <text evidence="5 6 10">Lytic polysaccharide monooxygenase (LPMO) that depolymerizes crystalline and amorphous polysaccharides via the oxidation of scissile alpha- or beta-(1-4)-glycosidic bonds, yielding C1 and C4 oxidation products (PubMed:23124232, PubMed:26136828). Catalysis by LPMOs requires the reduction of the active-site copper from Cu(II) to Cu(I) by a reducing agent and H(2)O(2) or O(2) as a cosubstrate (Probable).</text>
</comment>
<comment type="catalytic activity">
    <reaction evidence="5 6">
        <text>[(1-&gt;4)-beta-D-glucosyl]n+m + reduced acceptor + O2 = 4-dehydro-beta-D-glucosyl-[(1-&gt;4)-beta-D-glucosyl]n-1 + [(1-&gt;4)-beta-D-glucosyl]m + acceptor + H2O.</text>
        <dbReference type="EC" id="1.14.99.56"/>
    </reaction>
</comment>
<comment type="cofactor">
    <cofactor evidence="1">
        <name>Cu(2+)</name>
        <dbReference type="ChEBI" id="CHEBI:29036"/>
    </cofactor>
    <text evidence="1">Binds 1 copper ion per subunit.</text>
</comment>
<comment type="subcellular location">
    <subcellularLocation>
        <location evidence="10">Secreted</location>
    </subcellularLocation>
</comment>
<comment type="domain">
    <text evidence="6">Has a modular structure: an endo-beta-1,4-glucanase catalytic module at the N-terminus, a linker rich in serines and threonines, and a C-terminal carbohydrate-binding module (CBM). The CBM domain is essential for binding to and subsequent oxidative degradation of polysaccharide substrate.</text>
</comment>
<comment type="biotechnology">
    <text evidence="5">Lignocellulose is the most abundant polymeric composite on Earth and is a recalcitrant but promising renewable substrate for industrial biotechnology applications. Together with cellobiose dehydrogenases (CDHs) an enzymatic system capable of oxidative cellulose cleavage is formed, which increases the efficiency of cellulases and put LPMOs at focus of biofuel research.</text>
</comment>
<comment type="similarity">
    <text evidence="9">Belongs to the polysaccharide monooxygenase AA9 family.</text>
</comment>
<sequence length="351" mass="35926">MSNKAATLLAALSGAALVAAHGHVSHIIVNGVYYQNYDPTTHFYQPNPPTVIGWSALQQDNGFVEPNNFGTTDIICHKSAAPGGGSATVNAGDKISIVWTPEWPESHIGPVIDYLANCNGPCETVDKTSLRWFKIGGAGYNPNTRTWAADDLRANGNSWLVQIPADLKAGNYVLRHEIIALHGGSSPNGAQAYPQCLNLRIVGNGNNSPAGVAGTSLYRANDAGILFNPYVASPNYPVPGPALIAGAVSSIPQSKSTATRTASATLPGAPVVTPTAGPVVTTSSAPVVQPPTTTLVTVTSAPATSAAPAPTGGAGVAPKWGQCGGNGWTGPTVCASGSTCTVLNPYYSQCI</sequence>
<proteinExistence type="evidence at protein level"/>
<feature type="signal peptide" evidence="3">
    <location>
        <begin position="1"/>
        <end position="20"/>
    </location>
</feature>
<feature type="chain" id="PRO_5007639299" description="AA9 family lytic polysaccharide monooxygenase A">
    <location>
        <begin position="21"/>
        <end position="351"/>
    </location>
</feature>
<feature type="domain" description="CBM1" evidence="4">
    <location>
        <begin position="315"/>
        <end position="351"/>
    </location>
</feature>
<feature type="binding site" evidence="1">
    <location>
        <position position="21"/>
    </location>
    <ligand>
        <name>Cu(2+)</name>
        <dbReference type="ChEBI" id="CHEBI:29036"/>
        <note>catalytic</note>
    </ligand>
</feature>
<feature type="binding site" evidence="1">
    <location>
        <position position="107"/>
    </location>
    <ligand>
        <name>Cu(2+)</name>
        <dbReference type="ChEBI" id="CHEBI:29036"/>
        <note>catalytic</note>
    </ligand>
</feature>
<feature type="binding site" evidence="1">
    <location>
        <position position="182"/>
    </location>
    <ligand>
        <name>O2</name>
        <dbReference type="ChEBI" id="CHEBI:15379"/>
    </ligand>
</feature>
<feature type="binding site" evidence="1">
    <location>
        <position position="191"/>
    </location>
    <ligand>
        <name>O2</name>
        <dbReference type="ChEBI" id="CHEBI:15379"/>
    </ligand>
</feature>
<feature type="binding site" evidence="1">
    <location>
        <position position="193"/>
    </location>
    <ligand>
        <name>Cu(2+)</name>
        <dbReference type="ChEBI" id="CHEBI:29036"/>
        <note>catalytic</note>
    </ligand>
</feature>
<feature type="disulfide bond" evidence="2">
    <location>
        <begin position="76"/>
        <end position="196"/>
    </location>
</feature>
<reference key="1">
    <citation type="journal article" date="2008" name="Genome Biol.">
        <title>The genome sequence of the model ascomycete fungus Podospora anserina.</title>
        <authorList>
            <person name="Espagne E."/>
            <person name="Lespinet O."/>
            <person name="Malagnac F."/>
            <person name="Da Silva C."/>
            <person name="Jaillon O."/>
            <person name="Porcel B.M."/>
            <person name="Couloux A."/>
            <person name="Aury J.-M."/>
            <person name="Segurens B."/>
            <person name="Poulain J."/>
            <person name="Anthouard V."/>
            <person name="Grossetete S."/>
            <person name="Khalili H."/>
            <person name="Coppin E."/>
            <person name="Dequard-Chablat M."/>
            <person name="Picard M."/>
            <person name="Contamine V."/>
            <person name="Arnaise S."/>
            <person name="Bourdais A."/>
            <person name="Berteaux-Lecellier V."/>
            <person name="Gautheret D."/>
            <person name="de Vries R.P."/>
            <person name="Battaglia E."/>
            <person name="Coutinho P.M."/>
            <person name="Danchin E.G.J."/>
            <person name="Henrissat B."/>
            <person name="El Khoury R."/>
            <person name="Sainsard-Chanet A."/>
            <person name="Boivin A."/>
            <person name="Pinan-Lucarre B."/>
            <person name="Sellem C.H."/>
            <person name="Debuchy R."/>
            <person name="Wincker P."/>
            <person name="Weissenbach J."/>
            <person name="Silar P."/>
        </authorList>
    </citation>
    <scope>NUCLEOTIDE SEQUENCE [LARGE SCALE GENOMIC DNA]</scope>
    <source>
        <strain>S / ATCC MYA-4624 / DSM 980 / FGSC 10383</strain>
    </source>
</reference>
<reference key="2">
    <citation type="journal article" date="2014" name="Genetics">
        <title>Maintaining two mating types: Structure of the mating type locus and its role in heterokaryosis in Podospora anserina.</title>
        <authorList>
            <person name="Grognet P."/>
            <person name="Bidard F."/>
            <person name="Kuchly C."/>
            <person name="Tong L.C.H."/>
            <person name="Coppin E."/>
            <person name="Benkhali J.A."/>
            <person name="Couloux A."/>
            <person name="Wincker P."/>
            <person name="Debuchy R."/>
            <person name="Silar P."/>
        </authorList>
    </citation>
    <scope>GENOME REANNOTATION</scope>
    <source>
        <strain>S / ATCC MYA-4624 / DSM 980 / FGSC 10383</strain>
    </source>
</reference>
<reference key="3">
    <citation type="journal article" date="2013" name="Appl. Environ. Microbiol.">
        <title>Cello-oligosaccharide oxidation reveals differences between two lytic polysaccharide monooxygenases (family GH61) from Podospora anserina.</title>
        <authorList>
            <person name="Bey M."/>
            <person name="Zhou S."/>
            <person name="Poidevin L."/>
            <person name="Henrissat B."/>
            <person name="Coutinho P.M."/>
            <person name="Berrin J.G."/>
            <person name="Sigoillot J.C."/>
        </authorList>
    </citation>
    <scope>FUNCTION</scope>
    <scope>CATALYTIC ACTIVITY</scope>
    <scope>BIOTECHNOLOGY</scope>
</reference>
<reference key="4">
    <citation type="journal article" date="2015" name="Biotechnol. Biofuels">
        <title>Substrate specificity and regioselectivity of fungal AA9 lytic polysaccharide monooxygenases secreted by Podospora anserina.</title>
        <authorList>
            <person name="Bennati-Granier C."/>
            <person name="Garajova S."/>
            <person name="Champion C."/>
            <person name="Grisel S."/>
            <person name="Haon M."/>
            <person name="Zhou S."/>
            <person name="Fanuel M."/>
            <person name="Ropartz D."/>
            <person name="Rogniaux H."/>
            <person name="Gimbert I."/>
            <person name="Record E."/>
            <person name="Berrin J.G."/>
        </authorList>
    </citation>
    <scope>FUNCTION</scope>
    <scope>CATALYTIC ACTIVITY</scope>
    <scope>DOMAIN</scope>
</reference>
<gene>
    <name evidence="8" type="primary">LPMO9A</name>
    <name evidence="7" type="synonym">GH61A</name>
    <name type="ORF">PODANS_2_6530</name>
</gene>
<name>LP9A_PODAN</name>
<evidence type="ECO:0000250" key="1">
    <source>
        <dbReference type="UniProtKB" id="Q1K8B6"/>
    </source>
</evidence>
<evidence type="ECO:0000250" key="2">
    <source>
        <dbReference type="UniProtKB" id="Q4WP32"/>
    </source>
</evidence>
<evidence type="ECO:0000255" key="3"/>
<evidence type="ECO:0000255" key="4">
    <source>
        <dbReference type="PROSITE-ProRule" id="PRU00597"/>
    </source>
</evidence>
<evidence type="ECO:0000269" key="5">
    <source>
    </source>
</evidence>
<evidence type="ECO:0000269" key="6">
    <source>
    </source>
</evidence>
<evidence type="ECO:0000303" key="7">
    <source>
    </source>
</evidence>
<evidence type="ECO:0000303" key="8">
    <source>
    </source>
</evidence>
<evidence type="ECO:0000305" key="9"/>
<evidence type="ECO:0000305" key="10">
    <source>
    </source>
</evidence>
<accession>B2B629</accession>
<protein>
    <recommendedName>
        <fullName evidence="8">AA9 family lytic polysaccharide monooxygenase A</fullName>
        <shortName evidence="8">LPMO9A</shortName>
        <ecNumber evidence="5 6">1.14.99.56</ecNumber>
    </recommendedName>
    <alternativeName>
        <fullName evidence="9">Cellulase LPMO9A</fullName>
    </alternativeName>
    <alternativeName>
        <fullName evidence="9">Endo-beta-1,4-glucanase LPMO9A</fullName>
        <shortName evidence="9">Endoglucanase LPMO9A</shortName>
    </alternativeName>
    <alternativeName>
        <fullName evidence="9">Glycosyl hydrolase 61 family protein LPMO9A</fullName>
    </alternativeName>
</protein>